<gene>
    <name evidence="1" type="primary">def</name>
    <name type="ordered locus">TERTU_0037</name>
</gene>
<feature type="chain" id="PRO_1000203608" description="Peptide deformylase">
    <location>
        <begin position="1"/>
        <end position="168"/>
    </location>
</feature>
<feature type="active site" evidence="1">
    <location>
        <position position="135"/>
    </location>
</feature>
<feature type="binding site" evidence="1">
    <location>
        <position position="92"/>
    </location>
    <ligand>
        <name>Fe cation</name>
        <dbReference type="ChEBI" id="CHEBI:24875"/>
    </ligand>
</feature>
<feature type="binding site" evidence="1">
    <location>
        <position position="134"/>
    </location>
    <ligand>
        <name>Fe cation</name>
        <dbReference type="ChEBI" id="CHEBI:24875"/>
    </ligand>
</feature>
<feature type="binding site" evidence="1">
    <location>
        <position position="138"/>
    </location>
    <ligand>
        <name>Fe cation</name>
        <dbReference type="ChEBI" id="CHEBI:24875"/>
    </ligand>
</feature>
<protein>
    <recommendedName>
        <fullName evidence="1">Peptide deformylase</fullName>
        <shortName evidence="1">PDF</shortName>
        <ecNumber evidence="1">3.5.1.88</ecNumber>
    </recommendedName>
    <alternativeName>
        <fullName evidence="1">Polypeptide deformylase</fullName>
    </alternativeName>
</protein>
<comment type="function">
    <text evidence="1">Removes the formyl group from the N-terminal Met of newly synthesized proteins. Requires at least a dipeptide for an efficient rate of reaction. N-terminal L-methionine is a prerequisite for activity but the enzyme has broad specificity at other positions.</text>
</comment>
<comment type="catalytic activity">
    <reaction evidence="1">
        <text>N-terminal N-formyl-L-methionyl-[peptide] + H2O = N-terminal L-methionyl-[peptide] + formate</text>
        <dbReference type="Rhea" id="RHEA:24420"/>
        <dbReference type="Rhea" id="RHEA-COMP:10639"/>
        <dbReference type="Rhea" id="RHEA-COMP:10640"/>
        <dbReference type="ChEBI" id="CHEBI:15377"/>
        <dbReference type="ChEBI" id="CHEBI:15740"/>
        <dbReference type="ChEBI" id="CHEBI:49298"/>
        <dbReference type="ChEBI" id="CHEBI:64731"/>
        <dbReference type="EC" id="3.5.1.88"/>
    </reaction>
</comment>
<comment type="cofactor">
    <cofactor evidence="1">
        <name>Fe(2+)</name>
        <dbReference type="ChEBI" id="CHEBI:29033"/>
    </cofactor>
    <text evidence="1">Binds 1 Fe(2+) ion.</text>
</comment>
<comment type="similarity">
    <text evidence="1">Belongs to the polypeptide deformylase family.</text>
</comment>
<accession>C5BKQ0</accession>
<proteinExistence type="inferred from homology"/>
<dbReference type="EC" id="3.5.1.88" evidence="1"/>
<dbReference type="EMBL" id="CP001614">
    <property type="protein sequence ID" value="ACR11844.1"/>
    <property type="molecule type" value="Genomic_DNA"/>
</dbReference>
<dbReference type="RefSeq" id="WP_015817955.1">
    <property type="nucleotide sequence ID" value="NC_012997.1"/>
</dbReference>
<dbReference type="SMR" id="C5BKQ0"/>
<dbReference type="STRING" id="377629.TERTU_0037"/>
<dbReference type="KEGG" id="ttu:TERTU_0037"/>
<dbReference type="eggNOG" id="COG0242">
    <property type="taxonomic scope" value="Bacteria"/>
</dbReference>
<dbReference type="HOGENOM" id="CLU_061901_2_1_6"/>
<dbReference type="OrthoDB" id="9804313at2"/>
<dbReference type="Proteomes" id="UP000009080">
    <property type="component" value="Chromosome"/>
</dbReference>
<dbReference type="GO" id="GO:0046872">
    <property type="term" value="F:metal ion binding"/>
    <property type="evidence" value="ECO:0007669"/>
    <property type="project" value="UniProtKB-KW"/>
</dbReference>
<dbReference type="GO" id="GO:0042586">
    <property type="term" value="F:peptide deformylase activity"/>
    <property type="evidence" value="ECO:0007669"/>
    <property type="project" value="UniProtKB-UniRule"/>
</dbReference>
<dbReference type="GO" id="GO:0043686">
    <property type="term" value="P:co-translational protein modification"/>
    <property type="evidence" value="ECO:0007669"/>
    <property type="project" value="TreeGrafter"/>
</dbReference>
<dbReference type="GO" id="GO:0006412">
    <property type="term" value="P:translation"/>
    <property type="evidence" value="ECO:0007669"/>
    <property type="project" value="UniProtKB-UniRule"/>
</dbReference>
<dbReference type="CDD" id="cd00487">
    <property type="entry name" value="Pep_deformylase"/>
    <property type="match status" value="1"/>
</dbReference>
<dbReference type="FunFam" id="3.90.45.10:FF:000001">
    <property type="entry name" value="Peptide deformylase"/>
    <property type="match status" value="1"/>
</dbReference>
<dbReference type="Gene3D" id="3.90.45.10">
    <property type="entry name" value="Peptide deformylase"/>
    <property type="match status" value="1"/>
</dbReference>
<dbReference type="HAMAP" id="MF_00163">
    <property type="entry name" value="Pep_deformylase"/>
    <property type="match status" value="1"/>
</dbReference>
<dbReference type="InterPro" id="IPR023635">
    <property type="entry name" value="Peptide_deformylase"/>
</dbReference>
<dbReference type="InterPro" id="IPR036821">
    <property type="entry name" value="Peptide_deformylase_sf"/>
</dbReference>
<dbReference type="NCBIfam" id="TIGR00079">
    <property type="entry name" value="pept_deformyl"/>
    <property type="match status" value="1"/>
</dbReference>
<dbReference type="NCBIfam" id="NF001159">
    <property type="entry name" value="PRK00150.1-3"/>
    <property type="match status" value="1"/>
</dbReference>
<dbReference type="PANTHER" id="PTHR10458">
    <property type="entry name" value="PEPTIDE DEFORMYLASE"/>
    <property type="match status" value="1"/>
</dbReference>
<dbReference type="PANTHER" id="PTHR10458:SF21">
    <property type="entry name" value="PEPTIDE DEFORMYLASE"/>
    <property type="match status" value="1"/>
</dbReference>
<dbReference type="Pfam" id="PF01327">
    <property type="entry name" value="Pep_deformylase"/>
    <property type="match status" value="1"/>
</dbReference>
<dbReference type="PIRSF" id="PIRSF004749">
    <property type="entry name" value="Pep_def"/>
    <property type="match status" value="1"/>
</dbReference>
<dbReference type="PRINTS" id="PR01576">
    <property type="entry name" value="PDEFORMYLASE"/>
</dbReference>
<dbReference type="SUPFAM" id="SSF56420">
    <property type="entry name" value="Peptide deformylase"/>
    <property type="match status" value="1"/>
</dbReference>
<reference key="1">
    <citation type="journal article" date="2009" name="PLoS ONE">
        <title>The complete genome of Teredinibacter turnerae T7901: an intracellular endosymbiont of marine wood-boring bivalves (shipworms).</title>
        <authorList>
            <person name="Yang J.C."/>
            <person name="Madupu R."/>
            <person name="Durkin A.S."/>
            <person name="Ekborg N.A."/>
            <person name="Pedamallu C.S."/>
            <person name="Hostetler J.B."/>
            <person name="Radune D."/>
            <person name="Toms B.S."/>
            <person name="Henrissat B."/>
            <person name="Coutinho P.M."/>
            <person name="Schwarz S."/>
            <person name="Field L."/>
            <person name="Trindade-Silva A.E."/>
            <person name="Soares C.A.G."/>
            <person name="Elshahawi S."/>
            <person name="Hanora A."/>
            <person name="Schmidt E.W."/>
            <person name="Haygood M.G."/>
            <person name="Posfai J."/>
            <person name="Benner J."/>
            <person name="Madinger C."/>
            <person name="Nove J."/>
            <person name="Anton B."/>
            <person name="Chaudhary K."/>
            <person name="Foster J."/>
            <person name="Holman A."/>
            <person name="Kumar S."/>
            <person name="Lessard P.A."/>
            <person name="Luyten Y.A."/>
            <person name="Slatko B."/>
            <person name="Wood N."/>
            <person name="Wu B."/>
            <person name="Teplitski M."/>
            <person name="Mougous J.D."/>
            <person name="Ward N."/>
            <person name="Eisen J.A."/>
            <person name="Badger J.H."/>
            <person name="Distel D.L."/>
        </authorList>
    </citation>
    <scope>NUCLEOTIDE SEQUENCE [LARGE SCALE GENOMIC DNA]</scope>
    <source>
        <strain>ATCC 39867 / T7901</strain>
    </source>
</reference>
<organism>
    <name type="scientific">Teredinibacter turnerae (strain ATCC 39867 / T7901)</name>
    <dbReference type="NCBI Taxonomy" id="377629"/>
    <lineage>
        <taxon>Bacteria</taxon>
        <taxon>Pseudomonadati</taxon>
        <taxon>Pseudomonadota</taxon>
        <taxon>Gammaproteobacteria</taxon>
        <taxon>Cellvibrionales</taxon>
        <taxon>Cellvibrionaceae</taxon>
        <taxon>Teredinibacter</taxon>
    </lineage>
</organism>
<evidence type="ECO:0000255" key="1">
    <source>
        <dbReference type="HAMAP-Rule" id="MF_00163"/>
    </source>
</evidence>
<name>DEF_TERTT</name>
<sequence>MALLPILEFPDARLRTVAKPVEQVDERVRAIIDDMFETMYDAPGIGLAATQVNVHEQIIVIDISENHDEPLVFINPRIDVLDETLFDYEEGCLSVPGFYEEVTRPRHVRVTALNRDGEEFVLEPEGLLAVCIQHEIDHLKGKLFVDYVSNIKRQRIRKKLEKQHKERA</sequence>
<keyword id="KW-0378">Hydrolase</keyword>
<keyword id="KW-0408">Iron</keyword>
<keyword id="KW-0479">Metal-binding</keyword>
<keyword id="KW-0648">Protein biosynthesis</keyword>
<keyword id="KW-1185">Reference proteome</keyword>